<gene>
    <name evidence="1" type="primary">def</name>
    <name type="ordered locus">TWT_310</name>
</gene>
<sequence length="228" mass="25290">MSQDRRYTGCNTHSNTHSAQDREKEGAVPKISGGKILPIYITGHAVLHAPAKPVTDFSGIQEIVRDMFATMFAAPGVGLAGPQIGLGLRIFVYSYTEGDTLHQGVAINPDLLIPKGVPKRQTNKQQANNSTSCDEPDREGCLSFPGYQFPLERAPQVTLSAFDENKKPFTVHATGWLARIFQHEFDHLQGTLYVDRLAQKYSGEVRQAVLNNKWGIPGKYWVPQEPKE</sequence>
<evidence type="ECO:0000255" key="1">
    <source>
        <dbReference type="HAMAP-Rule" id="MF_00163"/>
    </source>
</evidence>
<evidence type="ECO:0000256" key="2">
    <source>
        <dbReference type="SAM" id="MobiDB-lite"/>
    </source>
</evidence>
<organism>
    <name type="scientific">Tropheryma whipplei (strain Twist)</name>
    <name type="common">Whipple's bacillus</name>
    <dbReference type="NCBI Taxonomy" id="203267"/>
    <lineage>
        <taxon>Bacteria</taxon>
        <taxon>Bacillati</taxon>
        <taxon>Actinomycetota</taxon>
        <taxon>Actinomycetes</taxon>
        <taxon>Micrococcales</taxon>
        <taxon>Tropherymataceae</taxon>
        <taxon>Tropheryma</taxon>
    </lineage>
</organism>
<dbReference type="EC" id="3.5.1.88" evidence="1"/>
<dbReference type="EMBL" id="AE014184">
    <property type="protein sequence ID" value="AAO44407.1"/>
    <property type="molecule type" value="Genomic_DNA"/>
</dbReference>
<dbReference type="SMR" id="Q83GH8"/>
<dbReference type="STRING" id="203267.TWT_310"/>
<dbReference type="KEGG" id="twh:TWT_310"/>
<dbReference type="eggNOG" id="COG0242">
    <property type="taxonomic scope" value="Bacteria"/>
</dbReference>
<dbReference type="HOGENOM" id="CLU_061901_1_2_11"/>
<dbReference type="Proteomes" id="UP000002200">
    <property type="component" value="Chromosome"/>
</dbReference>
<dbReference type="GO" id="GO:0046872">
    <property type="term" value="F:metal ion binding"/>
    <property type="evidence" value="ECO:0007669"/>
    <property type="project" value="UniProtKB-KW"/>
</dbReference>
<dbReference type="GO" id="GO:0042586">
    <property type="term" value="F:peptide deformylase activity"/>
    <property type="evidence" value="ECO:0007669"/>
    <property type="project" value="UniProtKB-UniRule"/>
</dbReference>
<dbReference type="GO" id="GO:0043686">
    <property type="term" value="P:co-translational protein modification"/>
    <property type="evidence" value="ECO:0007669"/>
    <property type="project" value="TreeGrafter"/>
</dbReference>
<dbReference type="GO" id="GO:0006412">
    <property type="term" value="P:translation"/>
    <property type="evidence" value="ECO:0007669"/>
    <property type="project" value="UniProtKB-UniRule"/>
</dbReference>
<dbReference type="CDD" id="cd00487">
    <property type="entry name" value="Pep_deformylase"/>
    <property type="match status" value="1"/>
</dbReference>
<dbReference type="Gene3D" id="3.90.45.10">
    <property type="entry name" value="Peptide deformylase"/>
    <property type="match status" value="1"/>
</dbReference>
<dbReference type="HAMAP" id="MF_00163">
    <property type="entry name" value="Pep_deformylase"/>
    <property type="match status" value="1"/>
</dbReference>
<dbReference type="InterPro" id="IPR023635">
    <property type="entry name" value="Peptide_deformylase"/>
</dbReference>
<dbReference type="InterPro" id="IPR036821">
    <property type="entry name" value="Peptide_deformylase_sf"/>
</dbReference>
<dbReference type="NCBIfam" id="TIGR00079">
    <property type="entry name" value="pept_deformyl"/>
    <property type="match status" value="1"/>
</dbReference>
<dbReference type="NCBIfam" id="NF001159">
    <property type="entry name" value="PRK00150.1-3"/>
    <property type="match status" value="1"/>
</dbReference>
<dbReference type="PANTHER" id="PTHR10458">
    <property type="entry name" value="PEPTIDE DEFORMYLASE"/>
    <property type="match status" value="1"/>
</dbReference>
<dbReference type="PANTHER" id="PTHR10458:SF2">
    <property type="entry name" value="PEPTIDE DEFORMYLASE, MITOCHONDRIAL"/>
    <property type="match status" value="1"/>
</dbReference>
<dbReference type="Pfam" id="PF01327">
    <property type="entry name" value="Pep_deformylase"/>
    <property type="match status" value="1"/>
</dbReference>
<dbReference type="PIRSF" id="PIRSF004749">
    <property type="entry name" value="Pep_def"/>
    <property type="match status" value="1"/>
</dbReference>
<dbReference type="PRINTS" id="PR01576">
    <property type="entry name" value="PDEFORMYLASE"/>
</dbReference>
<dbReference type="SUPFAM" id="SSF56420">
    <property type="entry name" value="Peptide deformylase"/>
    <property type="match status" value="1"/>
</dbReference>
<comment type="function">
    <text evidence="1">Removes the formyl group from the N-terminal Met of newly synthesized proteins. Requires at least a dipeptide for an efficient rate of reaction. N-terminal L-methionine is a prerequisite for activity but the enzyme has broad specificity at other positions.</text>
</comment>
<comment type="catalytic activity">
    <reaction evidence="1">
        <text>N-terminal N-formyl-L-methionyl-[peptide] + H2O = N-terminal L-methionyl-[peptide] + formate</text>
        <dbReference type="Rhea" id="RHEA:24420"/>
        <dbReference type="Rhea" id="RHEA-COMP:10639"/>
        <dbReference type="Rhea" id="RHEA-COMP:10640"/>
        <dbReference type="ChEBI" id="CHEBI:15377"/>
        <dbReference type="ChEBI" id="CHEBI:15740"/>
        <dbReference type="ChEBI" id="CHEBI:49298"/>
        <dbReference type="ChEBI" id="CHEBI:64731"/>
        <dbReference type="EC" id="3.5.1.88"/>
    </reaction>
</comment>
<comment type="cofactor">
    <cofactor evidence="1">
        <name>Fe(2+)</name>
        <dbReference type="ChEBI" id="CHEBI:29033"/>
    </cofactor>
    <text evidence="1">Binds 1 Fe(2+) ion.</text>
</comment>
<comment type="similarity">
    <text evidence="1">Belongs to the polypeptide deformylase family.</text>
</comment>
<accession>Q83GH8</accession>
<feature type="chain" id="PRO_0000082871" description="Peptide deformylase">
    <location>
        <begin position="1"/>
        <end position="228"/>
    </location>
</feature>
<feature type="region of interest" description="Disordered" evidence="2">
    <location>
        <begin position="1"/>
        <end position="28"/>
    </location>
</feature>
<feature type="region of interest" description="Disordered" evidence="2">
    <location>
        <begin position="116"/>
        <end position="138"/>
    </location>
</feature>
<feature type="compositionally biased region" description="Polar residues" evidence="2">
    <location>
        <begin position="8"/>
        <end position="18"/>
    </location>
</feature>
<feature type="compositionally biased region" description="Polar residues" evidence="2">
    <location>
        <begin position="123"/>
        <end position="133"/>
    </location>
</feature>
<feature type="active site" evidence="1">
    <location>
        <position position="184"/>
    </location>
</feature>
<feature type="binding site" evidence="1">
    <location>
        <position position="141"/>
    </location>
    <ligand>
        <name>Fe cation</name>
        <dbReference type="ChEBI" id="CHEBI:24875"/>
    </ligand>
</feature>
<feature type="binding site" evidence="1">
    <location>
        <position position="183"/>
    </location>
    <ligand>
        <name>Fe cation</name>
        <dbReference type="ChEBI" id="CHEBI:24875"/>
    </ligand>
</feature>
<feature type="binding site" evidence="1">
    <location>
        <position position="187"/>
    </location>
    <ligand>
        <name>Fe cation</name>
        <dbReference type="ChEBI" id="CHEBI:24875"/>
    </ligand>
</feature>
<name>DEF_TROWT</name>
<proteinExistence type="inferred from homology"/>
<keyword id="KW-0378">Hydrolase</keyword>
<keyword id="KW-0408">Iron</keyword>
<keyword id="KW-0479">Metal-binding</keyword>
<keyword id="KW-0648">Protein biosynthesis</keyword>
<keyword id="KW-1185">Reference proteome</keyword>
<protein>
    <recommendedName>
        <fullName evidence="1">Peptide deformylase</fullName>
        <shortName evidence="1">PDF</shortName>
        <ecNumber evidence="1">3.5.1.88</ecNumber>
    </recommendedName>
    <alternativeName>
        <fullName evidence="1">Polypeptide deformylase</fullName>
    </alternativeName>
</protein>
<reference key="1">
    <citation type="journal article" date="2003" name="Genome Res.">
        <title>Tropheryma whipplei twist: a human pathogenic Actinobacteria with a reduced genome.</title>
        <authorList>
            <person name="Raoult D."/>
            <person name="Ogata H."/>
            <person name="Audic S."/>
            <person name="Robert C."/>
            <person name="Suhre K."/>
            <person name="Drancourt M."/>
            <person name="Claverie J.-M."/>
        </authorList>
    </citation>
    <scope>NUCLEOTIDE SEQUENCE [LARGE SCALE GENOMIC DNA]</scope>
    <source>
        <strain>Twist</strain>
    </source>
</reference>